<accession>B3EWS0</accession>
<keyword id="KW-0020">Allergen</keyword>
<keyword id="KW-0903">Direct protein sequencing</keyword>
<keyword id="KW-1015">Disulfide bond</keyword>
<keyword id="KW-0326">Glycosidase</keyword>
<keyword id="KW-0378">Hydrolase</keyword>
<reference key="1">
    <citation type="journal article" date="2013" name="Allergol. Int.">
        <title>Characterization and gene cloning of an acidic thaumatin-like protein (TLP 1), an allergen from sapodilla fruit (Manilkara zapota).</title>
        <authorList>
            <person name="Ashok Kumar H.G."/>
            <person name="Hegde V.L."/>
            <person name="Shetty S.M."/>
            <person name="Venkatesh Y.P."/>
        </authorList>
    </citation>
    <scope>PROTEIN SEQUENCE</scope>
    <scope>FUNCTION</scope>
    <scope>SUBUNIT</scope>
    <scope>LACK OF GLYCOSYLATION</scope>
    <scope>ALLERGENICITY</scope>
    <source>
        <strain>cv. Cricket Ball</strain>
        <tissue>Fruit</tissue>
    </source>
</reference>
<proteinExistence type="evidence at protein level"/>
<feature type="chain" id="PRO_0000420801" description="Thaumatin-like protein 1a">
    <location>
        <begin position="1"/>
        <end position="12" status="greater than"/>
    </location>
</feature>
<feature type="disulfide bond" evidence="1 2">
    <location>
        <begin position="9"/>
        <end status="unknown"/>
    </location>
</feature>
<feature type="non-terminal residue">
    <location>
        <position position="12"/>
    </location>
</feature>
<sequence>ATFDIVNQCTFT</sequence>
<protein>
    <recommendedName>
        <fullName>Thaumatin-like protein 1a</fullName>
        <ecNumber>3.2.1.-</ecNumber>
    </recommendedName>
    <alternativeName>
        <fullName>Acidic thaumatin-like protein</fullName>
    </alternativeName>
    <alternativeName>
        <fullName>Beta-1,3-glucanase</fullName>
    </alternativeName>
</protein>
<evidence type="ECO:0000250" key="1">
    <source>
        <dbReference type="UniProtKB" id="G5DC91"/>
    </source>
</evidence>
<evidence type="ECO:0000255" key="2">
    <source>
        <dbReference type="PROSITE-ProRule" id="PRU00699"/>
    </source>
</evidence>
<evidence type="ECO:0000269" key="3">
    <source>
    </source>
</evidence>
<organism>
    <name type="scientific">Manilkara zapota</name>
    <name type="common">Sapodilla plum</name>
    <name type="synonym">Achras zapota</name>
    <dbReference type="NCBI Taxonomy" id="3741"/>
    <lineage>
        <taxon>Eukaryota</taxon>
        <taxon>Viridiplantae</taxon>
        <taxon>Streptophyta</taxon>
        <taxon>Embryophyta</taxon>
        <taxon>Tracheophyta</taxon>
        <taxon>Spermatophyta</taxon>
        <taxon>Magnoliopsida</taxon>
        <taxon>eudicotyledons</taxon>
        <taxon>Gunneridae</taxon>
        <taxon>Pentapetalae</taxon>
        <taxon>asterids</taxon>
        <taxon>Ericales</taxon>
        <taxon>Sapotaceae</taxon>
        <taxon>Sapotoideae</taxon>
        <taxon>Manilkara</taxon>
    </lineage>
</organism>
<name>TLP1A_MANZA</name>
<dbReference type="EC" id="3.2.1.-"/>
<dbReference type="GO" id="GO:0016798">
    <property type="term" value="F:hydrolase activity, acting on glycosyl bonds"/>
    <property type="evidence" value="ECO:0007669"/>
    <property type="project" value="UniProtKB-KW"/>
</dbReference>
<comment type="function">
    <text evidence="3">Has weak beta-1,3-glucanase activity with laminarin as substrate.</text>
</comment>
<comment type="subunit">
    <text evidence="3">Monomer.</text>
</comment>
<comment type="PTM">
    <text>Not glycosylated.</text>
</comment>
<comment type="allergen">
    <text evidence="3">Causes an allergic reaction in human. Binds to IgE.</text>
</comment>
<comment type="miscellaneous">
    <text>On the 2D-gel the determined pI of this protein is: 4.4.</text>
</comment>
<comment type="similarity">
    <text evidence="2">Belongs to the thaumatin family.</text>
</comment>